<sequence length="162" mass="17398">MAASCLRPAPTASAQMMTRSPVAGLPRPCSALQRSGCTLQGAFGTFAPQTTRTFVVTWAKGGVMDAPTTTQQPASGVERSQKRPPIYKVLLHNDNYNKREYVVKVLLKVVEQITVDDAVTCMQEAHETGVALVVACPQDNAERYCEGLRLNGLTSTIEPGGC</sequence>
<dbReference type="EMBL" id="DS496120">
    <property type="protein sequence ID" value="EDP04912.1"/>
    <property type="status" value="ALT_INIT"/>
    <property type="molecule type" value="Genomic_DNA"/>
</dbReference>
<dbReference type="EMBL" id="CM008978">
    <property type="protein sequence ID" value="PNW69877.1"/>
    <property type="molecule type" value="Genomic_DNA"/>
</dbReference>
<dbReference type="SMR" id="A0A2K3CNL6"/>
<dbReference type="FunCoup" id="A0A2K3CNL6">
    <property type="interactions" value="373"/>
</dbReference>
<dbReference type="STRING" id="3055.A0A2K3CNL6"/>
<dbReference type="PaxDb" id="3055-EDP04912"/>
<dbReference type="EnsemblPlants" id="PNW69877">
    <property type="protein sequence ID" value="PNW69877"/>
    <property type="gene ID" value="CHLRE_17g696400v5"/>
</dbReference>
<dbReference type="Gramene" id="PNW69877">
    <property type="protein sequence ID" value="PNW69877"/>
    <property type="gene ID" value="CHLRE_17g696400v5"/>
</dbReference>
<dbReference type="KEGG" id="cre:CHLRE_17g696400v5"/>
<dbReference type="eggNOG" id="ENOG502RZXT">
    <property type="taxonomic scope" value="Eukaryota"/>
</dbReference>
<dbReference type="HOGENOM" id="CLU_1770680_0_0_1"/>
<dbReference type="InParanoid" id="A0A2K3CNL6"/>
<dbReference type="OMA" id="IANEPMW"/>
<dbReference type="OrthoDB" id="2013930at2759"/>
<dbReference type="Proteomes" id="UP000006906">
    <property type="component" value="Chromosome 17"/>
</dbReference>
<dbReference type="ExpressionAtlas" id="A0A2K3CNL6">
    <property type="expression patterns" value="baseline and differential"/>
</dbReference>
<dbReference type="GO" id="GO:0009570">
    <property type="term" value="C:chloroplast stroma"/>
    <property type="evidence" value="ECO:0007669"/>
    <property type="project" value="UniProtKB-SubCell"/>
</dbReference>
<dbReference type="GO" id="GO:0030163">
    <property type="term" value="P:protein catabolic process"/>
    <property type="evidence" value="ECO:0007669"/>
    <property type="project" value="InterPro"/>
</dbReference>
<dbReference type="GO" id="GO:0006508">
    <property type="term" value="P:proteolysis"/>
    <property type="evidence" value="ECO:0007669"/>
    <property type="project" value="InterPro"/>
</dbReference>
<dbReference type="Gene3D" id="3.30.1390.10">
    <property type="match status" value="1"/>
</dbReference>
<dbReference type="HAMAP" id="MF_00302">
    <property type="entry name" value="ClpS"/>
    <property type="match status" value="1"/>
</dbReference>
<dbReference type="InterPro" id="IPR022935">
    <property type="entry name" value="ClpS"/>
</dbReference>
<dbReference type="InterPro" id="IPR003769">
    <property type="entry name" value="ClpS_core"/>
</dbReference>
<dbReference type="InterPro" id="IPR014719">
    <property type="entry name" value="Ribosomal_bL12_C/ClpS-like"/>
</dbReference>
<dbReference type="PANTHER" id="PTHR33473">
    <property type="entry name" value="ATP-DEPENDENT CLP PROTEASE ADAPTER PROTEIN CLPS1, CHLOROPLASTIC"/>
    <property type="match status" value="1"/>
</dbReference>
<dbReference type="PANTHER" id="PTHR33473:SF17">
    <property type="entry name" value="ATP-DEPENDENT CLP PROTEASE ADAPTER PROTEIN CLPS1, CHLOROPLASTIC"/>
    <property type="match status" value="1"/>
</dbReference>
<dbReference type="Pfam" id="PF02617">
    <property type="entry name" value="ClpS"/>
    <property type="match status" value="1"/>
</dbReference>
<dbReference type="SUPFAM" id="SSF54736">
    <property type="entry name" value="ClpS-like"/>
    <property type="match status" value="1"/>
</dbReference>
<comment type="function">
    <text evidence="1 2">Small adapter protein that modulate the activity of plastid Clp protease system (CLPC) (By similarity). Probably involved in substrate selection for plastid CLPC (By similarity).</text>
</comment>
<comment type="subcellular location">
    <subcellularLocation>
        <location evidence="2">Plastid</location>
        <location evidence="2">Chloroplast stroma</location>
    </subcellularLocation>
</comment>
<comment type="similarity">
    <text evidence="4">Belongs to the ClpS family.</text>
</comment>
<comment type="sequence caution" evidence="4">
    <conflict type="erroneous initiation">
        <sequence resource="EMBL-CDS" id="EDP04912"/>
    </conflict>
    <text>Truncated N-terminus.</text>
</comment>
<organism>
    <name type="scientific">Chlamydomonas reinhardtii</name>
    <name type="common">Chlamydomonas smithii</name>
    <dbReference type="NCBI Taxonomy" id="3055"/>
    <lineage>
        <taxon>Eukaryota</taxon>
        <taxon>Viridiplantae</taxon>
        <taxon>Chlorophyta</taxon>
        <taxon>core chlorophytes</taxon>
        <taxon>Chlorophyceae</taxon>
        <taxon>CS clade</taxon>
        <taxon>Chlamydomonadales</taxon>
        <taxon>Chlamydomonadaceae</taxon>
        <taxon>Chlamydomonas</taxon>
    </lineage>
</organism>
<accession>A0A2K3CNL6</accession>
<accession>A8IQY8</accession>
<gene>
    <name evidence="4" type="primary">CLPS1</name>
    <name evidence="6" type="ORF">CHLRE_17g696400v5</name>
    <name evidence="5" type="ORF">CHLREDRAFT_170547</name>
</gene>
<feature type="transit peptide" description="Chloroplast" evidence="3">
    <location>
        <begin position="1"/>
        <end position="58"/>
    </location>
</feature>
<feature type="chain" id="PRO_0000450660" description="ATP-dependent Clp protease adapter protein CLPS1, chloroplastic">
    <location>
        <begin position="59"/>
        <end position="162"/>
    </location>
</feature>
<keyword id="KW-0150">Chloroplast</keyword>
<keyword id="KW-0934">Plastid</keyword>
<keyword id="KW-1185">Reference proteome</keyword>
<keyword id="KW-0809">Transit peptide</keyword>
<name>CLPS1_CHLRE</name>
<reference key="1">
    <citation type="journal article" date="2007" name="Science">
        <title>The Chlamydomonas genome reveals the evolution of key animal and plant functions.</title>
        <authorList>
            <person name="Merchant S.S."/>
            <person name="Prochnik S.E."/>
            <person name="Vallon O."/>
            <person name="Harris E.H."/>
            <person name="Karpowicz S.J."/>
            <person name="Witman G.B."/>
            <person name="Terry A."/>
            <person name="Salamov A."/>
            <person name="Fritz-Laylin L.K."/>
            <person name="Marechal-Drouard L."/>
            <person name="Marshall W.F."/>
            <person name="Qu L.H."/>
            <person name="Nelson D.R."/>
            <person name="Sanderfoot A.A."/>
            <person name="Spalding M.H."/>
            <person name="Kapitonov V.V."/>
            <person name="Ren Q."/>
            <person name="Ferris P."/>
            <person name="Lindquist E."/>
            <person name="Shapiro H."/>
            <person name="Lucas S.M."/>
            <person name="Grimwood J."/>
            <person name="Schmutz J."/>
            <person name="Cardol P."/>
            <person name="Cerutti H."/>
            <person name="Chanfreau G."/>
            <person name="Chen C.L."/>
            <person name="Cognat V."/>
            <person name="Croft M.T."/>
            <person name="Dent R."/>
            <person name="Dutcher S."/>
            <person name="Fernandez E."/>
            <person name="Fukuzawa H."/>
            <person name="Gonzalez-Ballester D."/>
            <person name="Gonzalez-Halphen D."/>
            <person name="Hallmann A."/>
            <person name="Hanikenne M."/>
            <person name="Hippler M."/>
            <person name="Inwood W."/>
            <person name="Jabbari K."/>
            <person name="Kalanon M."/>
            <person name="Kuras R."/>
            <person name="Lefebvre P.A."/>
            <person name="Lemaire S.D."/>
            <person name="Lobanov A.V."/>
            <person name="Lohr M."/>
            <person name="Manuell A."/>
            <person name="Meier I."/>
            <person name="Mets L."/>
            <person name="Mittag M."/>
            <person name="Mittelmeier T."/>
            <person name="Moroney J.V."/>
            <person name="Moseley J."/>
            <person name="Napoli C."/>
            <person name="Nedelcu A.M."/>
            <person name="Niyogi K."/>
            <person name="Novoselov S.V."/>
            <person name="Paulsen I.T."/>
            <person name="Pazour G.J."/>
            <person name="Purton S."/>
            <person name="Ral J.P."/>
            <person name="Riano-Pachon D.M."/>
            <person name="Riekhof W."/>
            <person name="Rymarquis L."/>
            <person name="Schroda M."/>
            <person name="Stern D."/>
            <person name="Umen J."/>
            <person name="Willows R."/>
            <person name="Wilson N."/>
            <person name="Zimmer S.L."/>
            <person name="Allmer J."/>
            <person name="Balk J."/>
            <person name="Bisova K."/>
            <person name="Chen C.J."/>
            <person name="Elias M."/>
            <person name="Gendler K."/>
            <person name="Hauser C."/>
            <person name="Lamb M.R."/>
            <person name="Ledford H."/>
            <person name="Long J.C."/>
            <person name="Minagawa J."/>
            <person name="Page M.D."/>
            <person name="Pan J."/>
            <person name="Pootakham W."/>
            <person name="Roje S."/>
            <person name="Rose A."/>
            <person name="Stahlberg E."/>
            <person name="Terauchi A.M."/>
            <person name="Yang P."/>
            <person name="Ball S."/>
            <person name="Bowler C."/>
            <person name="Dieckmann C.L."/>
            <person name="Gladyshev V.N."/>
            <person name="Green P."/>
            <person name="Jorgensen R."/>
            <person name="Mayfield S."/>
            <person name="Mueller-Roeber B."/>
            <person name="Rajamani S."/>
            <person name="Sayre R.T."/>
            <person name="Brokstein P."/>
            <person name="Dubchak I."/>
            <person name="Goodstein D."/>
            <person name="Hornick L."/>
            <person name="Huang Y.W."/>
            <person name="Jhaveri J."/>
            <person name="Luo Y."/>
            <person name="Martinez D."/>
            <person name="Ngau W.C."/>
            <person name="Otillar B."/>
            <person name="Poliakov A."/>
            <person name="Porter A."/>
            <person name="Szajkowski L."/>
            <person name="Werner G."/>
            <person name="Zhou K."/>
            <person name="Grigoriev I.V."/>
            <person name="Rokhsar D.S."/>
            <person name="Grossman A.R."/>
        </authorList>
    </citation>
    <scope>NUCLEOTIDE SEQUENCE [LARGE SCALE GENOMIC DNA]</scope>
    <source>
        <strain>CC-503</strain>
    </source>
</reference>
<reference key="2">
    <citation type="submission" date="2017-07" db="EMBL/GenBank/DDBJ databases">
        <title>WGS assembly of Chlamydomonas reinhardtii.</title>
        <authorList>
            <consortium name="Chlamydomonas Annotation Team"/>
            <consortium name="JGI Annotation Team"/>
            <person name="Merchant S.S."/>
            <person name="Prochnik S.E."/>
            <person name="Vallon O."/>
            <person name="Harris E.H."/>
            <person name="Karpowicz S.J."/>
            <person name="Witman G.B."/>
            <person name="Terry A."/>
            <person name="Salamov A."/>
            <person name="Fritz-Laylin L.K."/>
            <person name="Marechal-Drouard L."/>
            <person name="Marshall W.F."/>
            <person name="Qu L.H."/>
            <person name="Nelson D.R."/>
            <person name="Sanderfoot A.A."/>
            <person name="Spalding M.H."/>
            <person name="Kapitonov V.V."/>
            <person name="Ren Q."/>
            <person name="Ferris P."/>
            <person name="Lindquist E."/>
            <person name="Shapiro H."/>
            <person name="Lucas S.M."/>
            <person name="Grimwood J."/>
            <person name="Schmutz J."/>
            <person name="Grigoriev I.V."/>
            <person name="Rokhsar D.S."/>
        </authorList>
    </citation>
    <scope>GENOME REANNOTATION</scope>
    <source>
        <strain>CC-503</strain>
    </source>
</reference>
<proteinExistence type="inferred from homology"/>
<protein>
    <recommendedName>
        <fullName evidence="4">ATP-dependent Clp protease adapter protein CLPS1, chloroplastic</fullName>
    </recommendedName>
</protein>
<evidence type="ECO:0000250" key="1">
    <source>
        <dbReference type="UniProtKB" id="P0A8Q6"/>
    </source>
</evidence>
<evidence type="ECO:0000250" key="2">
    <source>
        <dbReference type="UniProtKB" id="Q9SX29"/>
    </source>
</evidence>
<evidence type="ECO:0000255" key="3"/>
<evidence type="ECO:0000305" key="4"/>
<evidence type="ECO:0000312" key="5">
    <source>
        <dbReference type="EMBL" id="EDP04912.1"/>
    </source>
</evidence>
<evidence type="ECO:0000312" key="6">
    <source>
        <dbReference type="EMBL" id="PNW69877.1"/>
    </source>
</evidence>